<organism>
    <name type="scientific">Frog virus 3 (isolate Goorha)</name>
    <name type="common">FV-3</name>
    <dbReference type="NCBI Taxonomy" id="654924"/>
    <lineage>
        <taxon>Viruses</taxon>
        <taxon>Varidnaviria</taxon>
        <taxon>Bamfordvirae</taxon>
        <taxon>Nucleocytoviricota</taxon>
        <taxon>Megaviricetes</taxon>
        <taxon>Pimascovirales</taxon>
        <taxon>Iridoviridae</taxon>
        <taxon>Alphairidovirinae</taxon>
        <taxon>Ranavirus</taxon>
        <taxon>Frog virus 3</taxon>
    </lineage>
</organism>
<name>097R_FRG3G</name>
<feature type="chain" id="PRO_0000410508" description="Uncharacterized protein 097R">
    <location>
        <begin position="1"/>
        <end position="137"/>
    </location>
</feature>
<protein>
    <recommendedName>
        <fullName>Uncharacterized protein 097R</fullName>
    </recommendedName>
</protein>
<accession>Q6GZM8</accession>
<sequence length="137" mass="15302">MDVRQFLSDCEAPEEMVALRAAADAVGVDNRACAHLYTMLWEGVNLEEVHASLLGDGVVNWGRVAAFMHICRYIVRTFPSSMDRTEVALTKFIQDPKIDKQLREWTDRLGTVGLIGRCLEWLGAGVITGVVLSLLFY</sequence>
<keyword id="KW-1185">Reference proteome</keyword>
<gene>
    <name type="ORF">FV3-097R</name>
</gene>
<dbReference type="EMBL" id="AY548484">
    <property type="protein sequence ID" value="AAT09757.1"/>
    <property type="molecule type" value="Genomic_DNA"/>
</dbReference>
<dbReference type="RefSeq" id="YP_031676.1">
    <property type="nucleotide sequence ID" value="NC_005946.1"/>
</dbReference>
<dbReference type="KEGG" id="vg:2947790"/>
<dbReference type="Proteomes" id="UP000008770">
    <property type="component" value="Segment"/>
</dbReference>
<dbReference type="GO" id="GO:0042981">
    <property type="term" value="P:regulation of apoptotic process"/>
    <property type="evidence" value="ECO:0007669"/>
    <property type="project" value="InterPro"/>
</dbReference>
<dbReference type="Gene3D" id="1.10.437.10">
    <property type="entry name" value="Blc2-like"/>
    <property type="match status" value="1"/>
</dbReference>
<dbReference type="InterPro" id="IPR036834">
    <property type="entry name" value="Bcl-2-like_sf"/>
</dbReference>
<dbReference type="InterPro" id="IPR002475">
    <property type="entry name" value="Bcl2-like"/>
</dbReference>
<dbReference type="SUPFAM" id="SSF56854">
    <property type="entry name" value="Bcl-2 inhibitors of programmed cell death"/>
    <property type="match status" value="1"/>
</dbReference>
<dbReference type="PROSITE" id="PS50062">
    <property type="entry name" value="BCL2_FAMILY"/>
    <property type="match status" value="1"/>
</dbReference>
<reference key="1">
    <citation type="journal article" date="2004" name="Virology">
        <title>Comparative genomic analyses of frog virus 3, type species of the genus Ranavirus (family Iridoviridae).</title>
        <authorList>
            <person name="Tan W.G."/>
            <person name="Barkman T.J."/>
            <person name="Gregory Chinchar V."/>
            <person name="Essani K."/>
        </authorList>
    </citation>
    <scope>NUCLEOTIDE SEQUENCE [LARGE SCALE GENOMIC DNA]</scope>
</reference>
<proteinExistence type="predicted"/>
<organismHost>
    <name type="scientific">Dryophytes versicolor</name>
    <name type="common">chameleon treefrog</name>
    <dbReference type="NCBI Taxonomy" id="30343"/>
</organismHost>
<organismHost>
    <name type="scientific">Lithobates pipiens</name>
    <name type="common">Northern leopard frog</name>
    <name type="synonym">Rana pipiens</name>
    <dbReference type="NCBI Taxonomy" id="8404"/>
</organismHost>
<organismHost>
    <name type="scientific">Lithobates sylvaticus</name>
    <name type="common">Wood frog</name>
    <name type="synonym">Rana sylvatica</name>
    <dbReference type="NCBI Taxonomy" id="45438"/>
</organismHost>
<organismHost>
    <name type="scientific">Notophthalmus viridescens</name>
    <name type="common">Eastern newt</name>
    <name type="synonym">Triturus viridescens</name>
    <dbReference type="NCBI Taxonomy" id="8316"/>
</organismHost>